<accession>A5FS95</accession>
<feature type="chain" id="PRO_1000078835" description="Phenylalanine--tRNA ligase alpha subunit">
    <location>
        <begin position="1"/>
        <end position="346"/>
    </location>
</feature>
<feature type="binding site" evidence="1">
    <location>
        <position position="261"/>
    </location>
    <ligand>
        <name>Mg(2+)</name>
        <dbReference type="ChEBI" id="CHEBI:18420"/>
        <note>shared with beta subunit</note>
    </ligand>
</feature>
<name>SYFA_DEHMB</name>
<sequence>MEEIKNITDITQSALAELEAITDLKDLEAWRVRYLGKKSLLTGALRNLASLPIEERKAAGAAANEAKAALEAAFLQKEQISKEKQFASRNEGLDITLPGRPWPIGRIHPLTQVTNEVTTIFSSLGFSVVEGPEIEDDYHNFEALNIPEDHPARENMQTFWIDRPNDNGRLDTLLRTHTSPMQVRYMEKNKPPIRIVVPGKVYRYEATDATHIPMFTQVEGLVVDRGISMAHLKGTLMEFCRRFFGANRKVRFRCDYFPFVEPGVEVAVSCTCGGKKECSVCHGSGWLEILGAGMVHPKVLERVGIDSEQYTGFAFGMGLERLPMLRYGIDDIRLFYSNDTRFLRQF</sequence>
<organism>
    <name type="scientific">Dehalococcoides mccartyi (strain ATCC BAA-2100 / JCM 16839 / KCTC 5957 / BAV1)</name>
    <dbReference type="NCBI Taxonomy" id="216389"/>
    <lineage>
        <taxon>Bacteria</taxon>
        <taxon>Bacillati</taxon>
        <taxon>Chloroflexota</taxon>
        <taxon>Dehalococcoidia</taxon>
        <taxon>Dehalococcoidales</taxon>
        <taxon>Dehalococcoidaceae</taxon>
        <taxon>Dehalococcoides</taxon>
    </lineage>
</organism>
<gene>
    <name evidence="1" type="primary">pheS</name>
    <name type="ordered locus">DehaBAV1_0347</name>
</gene>
<protein>
    <recommendedName>
        <fullName evidence="1">Phenylalanine--tRNA ligase alpha subunit</fullName>
        <ecNumber evidence="1">6.1.1.20</ecNumber>
    </recommendedName>
    <alternativeName>
        <fullName evidence="1">Phenylalanyl-tRNA synthetase alpha subunit</fullName>
        <shortName evidence="1">PheRS</shortName>
    </alternativeName>
</protein>
<keyword id="KW-0030">Aminoacyl-tRNA synthetase</keyword>
<keyword id="KW-0067">ATP-binding</keyword>
<keyword id="KW-0963">Cytoplasm</keyword>
<keyword id="KW-0436">Ligase</keyword>
<keyword id="KW-0460">Magnesium</keyword>
<keyword id="KW-0479">Metal-binding</keyword>
<keyword id="KW-0547">Nucleotide-binding</keyword>
<keyword id="KW-0648">Protein biosynthesis</keyword>
<evidence type="ECO:0000255" key="1">
    <source>
        <dbReference type="HAMAP-Rule" id="MF_00281"/>
    </source>
</evidence>
<dbReference type="EC" id="6.1.1.20" evidence="1"/>
<dbReference type="EMBL" id="CP000688">
    <property type="protein sequence ID" value="ABQ16932.1"/>
    <property type="molecule type" value="Genomic_DNA"/>
</dbReference>
<dbReference type="SMR" id="A5FS95"/>
<dbReference type="KEGG" id="deb:DehaBAV1_0347"/>
<dbReference type="PATRIC" id="fig|216389.18.peg.386"/>
<dbReference type="HOGENOM" id="CLU_025086_0_1_0"/>
<dbReference type="GO" id="GO:0005737">
    <property type="term" value="C:cytoplasm"/>
    <property type="evidence" value="ECO:0007669"/>
    <property type="project" value="UniProtKB-SubCell"/>
</dbReference>
<dbReference type="GO" id="GO:0005524">
    <property type="term" value="F:ATP binding"/>
    <property type="evidence" value="ECO:0007669"/>
    <property type="project" value="UniProtKB-UniRule"/>
</dbReference>
<dbReference type="GO" id="GO:0000287">
    <property type="term" value="F:magnesium ion binding"/>
    <property type="evidence" value="ECO:0007669"/>
    <property type="project" value="UniProtKB-UniRule"/>
</dbReference>
<dbReference type="GO" id="GO:0004826">
    <property type="term" value="F:phenylalanine-tRNA ligase activity"/>
    <property type="evidence" value="ECO:0007669"/>
    <property type="project" value="UniProtKB-UniRule"/>
</dbReference>
<dbReference type="GO" id="GO:0000049">
    <property type="term" value="F:tRNA binding"/>
    <property type="evidence" value="ECO:0007669"/>
    <property type="project" value="InterPro"/>
</dbReference>
<dbReference type="GO" id="GO:0006432">
    <property type="term" value="P:phenylalanyl-tRNA aminoacylation"/>
    <property type="evidence" value="ECO:0007669"/>
    <property type="project" value="UniProtKB-UniRule"/>
</dbReference>
<dbReference type="CDD" id="cd00496">
    <property type="entry name" value="PheRS_alpha_core"/>
    <property type="match status" value="1"/>
</dbReference>
<dbReference type="FunFam" id="3.30.930.10:FF:000003">
    <property type="entry name" value="Phenylalanine--tRNA ligase alpha subunit"/>
    <property type="match status" value="1"/>
</dbReference>
<dbReference type="Gene3D" id="3.30.930.10">
    <property type="entry name" value="Bira Bifunctional Protein, Domain 2"/>
    <property type="match status" value="1"/>
</dbReference>
<dbReference type="HAMAP" id="MF_00281">
    <property type="entry name" value="Phe_tRNA_synth_alpha1"/>
    <property type="match status" value="1"/>
</dbReference>
<dbReference type="InterPro" id="IPR006195">
    <property type="entry name" value="aa-tRNA-synth_II"/>
</dbReference>
<dbReference type="InterPro" id="IPR045864">
    <property type="entry name" value="aa-tRNA-synth_II/BPL/LPL"/>
</dbReference>
<dbReference type="InterPro" id="IPR004529">
    <property type="entry name" value="Phe-tRNA-synth_IIc_asu"/>
</dbReference>
<dbReference type="InterPro" id="IPR004188">
    <property type="entry name" value="Phe-tRNA_ligase_II_N"/>
</dbReference>
<dbReference type="InterPro" id="IPR022911">
    <property type="entry name" value="Phe_tRNA_ligase_alpha1_bac"/>
</dbReference>
<dbReference type="InterPro" id="IPR002319">
    <property type="entry name" value="Phenylalanyl-tRNA_Synthase"/>
</dbReference>
<dbReference type="InterPro" id="IPR010978">
    <property type="entry name" value="tRNA-bd_arm"/>
</dbReference>
<dbReference type="NCBIfam" id="TIGR00468">
    <property type="entry name" value="pheS"/>
    <property type="match status" value="1"/>
</dbReference>
<dbReference type="PANTHER" id="PTHR11538:SF41">
    <property type="entry name" value="PHENYLALANINE--TRNA LIGASE, MITOCHONDRIAL"/>
    <property type="match status" value="1"/>
</dbReference>
<dbReference type="PANTHER" id="PTHR11538">
    <property type="entry name" value="PHENYLALANYL-TRNA SYNTHETASE"/>
    <property type="match status" value="1"/>
</dbReference>
<dbReference type="Pfam" id="PF02912">
    <property type="entry name" value="Phe_tRNA-synt_N"/>
    <property type="match status" value="1"/>
</dbReference>
<dbReference type="Pfam" id="PF01409">
    <property type="entry name" value="tRNA-synt_2d"/>
    <property type="match status" value="1"/>
</dbReference>
<dbReference type="SUPFAM" id="SSF55681">
    <property type="entry name" value="Class II aaRS and biotin synthetases"/>
    <property type="match status" value="1"/>
</dbReference>
<dbReference type="SUPFAM" id="SSF46589">
    <property type="entry name" value="tRNA-binding arm"/>
    <property type="match status" value="1"/>
</dbReference>
<dbReference type="PROSITE" id="PS50862">
    <property type="entry name" value="AA_TRNA_LIGASE_II"/>
    <property type="match status" value="1"/>
</dbReference>
<comment type="catalytic activity">
    <reaction evidence="1">
        <text>tRNA(Phe) + L-phenylalanine + ATP = L-phenylalanyl-tRNA(Phe) + AMP + diphosphate + H(+)</text>
        <dbReference type="Rhea" id="RHEA:19413"/>
        <dbReference type="Rhea" id="RHEA-COMP:9668"/>
        <dbReference type="Rhea" id="RHEA-COMP:9699"/>
        <dbReference type="ChEBI" id="CHEBI:15378"/>
        <dbReference type="ChEBI" id="CHEBI:30616"/>
        <dbReference type="ChEBI" id="CHEBI:33019"/>
        <dbReference type="ChEBI" id="CHEBI:58095"/>
        <dbReference type="ChEBI" id="CHEBI:78442"/>
        <dbReference type="ChEBI" id="CHEBI:78531"/>
        <dbReference type="ChEBI" id="CHEBI:456215"/>
        <dbReference type="EC" id="6.1.1.20"/>
    </reaction>
</comment>
<comment type="cofactor">
    <cofactor evidence="1">
        <name>Mg(2+)</name>
        <dbReference type="ChEBI" id="CHEBI:18420"/>
    </cofactor>
    <text evidence="1">Binds 2 magnesium ions per tetramer.</text>
</comment>
<comment type="subunit">
    <text evidence="1">Tetramer of two alpha and two beta subunits.</text>
</comment>
<comment type="subcellular location">
    <subcellularLocation>
        <location evidence="1">Cytoplasm</location>
    </subcellularLocation>
</comment>
<comment type="similarity">
    <text evidence="1">Belongs to the class-II aminoacyl-tRNA synthetase family. Phe-tRNA synthetase alpha subunit type 1 subfamily.</text>
</comment>
<reference key="1">
    <citation type="submission" date="2007-05" db="EMBL/GenBank/DDBJ databases">
        <title>Complete sequence of Dehalococcoides sp. BAV1.</title>
        <authorList>
            <consortium name="US DOE Joint Genome Institute"/>
            <person name="Copeland A."/>
            <person name="Lucas S."/>
            <person name="Lapidus A."/>
            <person name="Barry K."/>
            <person name="Detter J.C."/>
            <person name="Glavina del Rio T."/>
            <person name="Hammon N."/>
            <person name="Israni S."/>
            <person name="Pitluck S."/>
            <person name="Lowry S."/>
            <person name="Clum A."/>
            <person name="Schmutz J."/>
            <person name="Larimer F."/>
            <person name="Land M."/>
            <person name="Hauser L."/>
            <person name="Kyrpides N."/>
            <person name="Kim E."/>
            <person name="Ritalahti K.M."/>
            <person name="Loeffler F."/>
            <person name="Richardson P."/>
        </authorList>
    </citation>
    <scope>NUCLEOTIDE SEQUENCE [LARGE SCALE GENOMIC DNA]</scope>
    <source>
        <strain>ATCC BAA-2100 / JCM 16839 / KCTC 5957 / BAV1</strain>
    </source>
</reference>
<proteinExistence type="inferred from homology"/>